<feature type="chain" id="PRO_1000001207" description="Ribosome maturation factor RimM">
    <location>
        <begin position="1"/>
        <end position="189"/>
    </location>
</feature>
<feature type="domain" description="PRC barrel" evidence="1">
    <location>
        <begin position="96"/>
        <end position="169"/>
    </location>
</feature>
<feature type="region of interest" description="Disordered" evidence="2">
    <location>
        <begin position="170"/>
        <end position="189"/>
    </location>
</feature>
<proteinExistence type="inferred from homology"/>
<evidence type="ECO:0000255" key="1">
    <source>
        <dbReference type="HAMAP-Rule" id="MF_00014"/>
    </source>
</evidence>
<evidence type="ECO:0000256" key="2">
    <source>
        <dbReference type="SAM" id="MobiDB-lite"/>
    </source>
</evidence>
<dbReference type="EMBL" id="CP000758">
    <property type="protein sequence ID" value="ABS13664.1"/>
    <property type="molecule type" value="Genomic_DNA"/>
</dbReference>
<dbReference type="RefSeq" id="WP_010657582.1">
    <property type="nucleotide sequence ID" value="NC_009667.1"/>
</dbReference>
<dbReference type="SMR" id="A6WXG0"/>
<dbReference type="STRING" id="439375.Oant_0943"/>
<dbReference type="GeneID" id="61318629"/>
<dbReference type="KEGG" id="oan:Oant_0943"/>
<dbReference type="eggNOG" id="COG0806">
    <property type="taxonomic scope" value="Bacteria"/>
</dbReference>
<dbReference type="HOGENOM" id="CLU_077636_0_1_5"/>
<dbReference type="PhylomeDB" id="A6WXG0"/>
<dbReference type="Proteomes" id="UP000002301">
    <property type="component" value="Chromosome 1"/>
</dbReference>
<dbReference type="GO" id="GO:0005737">
    <property type="term" value="C:cytoplasm"/>
    <property type="evidence" value="ECO:0007669"/>
    <property type="project" value="UniProtKB-SubCell"/>
</dbReference>
<dbReference type="GO" id="GO:0005840">
    <property type="term" value="C:ribosome"/>
    <property type="evidence" value="ECO:0007669"/>
    <property type="project" value="InterPro"/>
</dbReference>
<dbReference type="GO" id="GO:0043022">
    <property type="term" value="F:ribosome binding"/>
    <property type="evidence" value="ECO:0007669"/>
    <property type="project" value="InterPro"/>
</dbReference>
<dbReference type="GO" id="GO:0042274">
    <property type="term" value="P:ribosomal small subunit biogenesis"/>
    <property type="evidence" value="ECO:0007669"/>
    <property type="project" value="UniProtKB-UniRule"/>
</dbReference>
<dbReference type="GO" id="GO:0006364">
    <property type="term" value="P:rRNA processing"/>
    <property type="evidence" value="ECO:0007669"/>
    <property type="project" value="UniProtKB-UniRule"/>
</dbReference>
<dbReference type="Gene3D" id="2.30.30.240">
    <property type="entry name" value="PRC-barrel domain"/>
    <property type="match status" value="1"/>
</dbReference>
<dbReference type="Gene3D" id="2.40.30.60">
    <property type="entry name" value="RimM"/>
    <property type="match status" value="1"/>
</dbReference>
<dbReference type="HAMAP" id="MF_00014">
    <property type="entry name" value="Ribosome_mat_RimM"/>
    <property type="match status" value="1"/>
</dbReference>
<dbReference type="InterPro" id="IPR011033">
    <property type="entry name" value="PRC_barrel-like_sf"/>
</dbReference>
<dbReference type="InterPro" id="IPR056792">
    <property type="entry name" value="PRC_RimM"/>
</dbReference>
<dbReference type="InterPro" id="IPR011961">
    <property type="entry name" value="RimM"/>
</dbReference>
<dbReference type="InterPro" id="IPR002676">
    <property type="entry name" value="RimM_N"/>
</dbReference>
<dbReference type="InterPro" id="IPR036976">
    <property type="entry name" value="RimM_N_sf"/>
</dbReference>
<dbReference type="InterPro" id="IPR009000">
    <property type="entry name" value="Transl_B-barrel_sf"/>
</dbReference>
<dbReference type="NCBIfam" id="TIGR02273">
    <property type="entry name" value="16S_RimM"/>
    <property type="match status" value="1"/>
</dbReference>
<dbReference type="PANTHER" id="PTHR33692">
    <property type="entry name" value="RIBOSOME MATURATION FACTOR RIMM"/>
    <property type="match status" value="1"/>
</dbReference>
<dbReference type="PANTHER" id="PTHR33692:SF1">
    <property type="entry name" value="RIBOSOME MATURATION FACTOR RIMM"/>
    <property type="match status" value="1"/>
</dbReference>
<dbReference type="Pfam" id="PF24986">
    <property type="entry name" value="PRC_RimM"/>
    <property type="match status" value="1"/>
</dbReference>
<dbReference type="Pfam" id="PF01782">
    <property type="entry name" value="RimM"/>
    <property type="match status" value="1"/>
</dbReference>
<dbReference type="SUPFAM" id="SSF50346">
    <property type="entry name" value="PRC-barrel domain"/>
    <property type="match status" value="1"/>
</dbReference>
<dbReference type="SUPFAM" id="SSF50447">
    <property type="entry name" value="Translation proteins"/>
    <property type="match status" value="1"/>
</dbReference>
<sequence length="189" mass="20676">MPRPENPIQLAVIGAAHGTRGEVRVKTFTGDPLAIAEYGLLYDEQGKSYEVLEARPAKTVVVVRFKGINDRNAAEALNGTELFIDRSQLPDDELDEDEFFQTDLIGLLAVDAEGKTYGVVSALFDFGGGDLIELSEKGKRPMLIPFTEAAVPEIDLDKGTLLVEPYAAGLIADDEDERPQNEKKKPKKS</sequence>
<reference key="1">
    <citation type="journal article" date="2011" name="J. Bacteriol.">
        <title>Genome of Ochrobactrum anthropi ATCC 49188 T, a versatile opportunistic pathogen and symbiont of several eukaryotic hosts.</title>
        <authorList>
            <person name="Chain P.S."/>
            <person name="Lang D.M."/>
            <person name="Comerci D.J."/>
            <person name="Malfatti S.A."/>
            <person name="Vergez L.M."/>
            <person name="Shin M."/>
            <person name="Ugalde R.A."/>
            <person name="Garcia E."/>
            <person name="Tolmasky M.E."/>
        </authorList>
    </citation>
    <scope>NUCLEOTIDE SEQUENCE [LARGE SCALE GENOMIC DNA]</scope>
    <source>
        <strain>ATCC 49188 / DSM 6882 / CCUG 24695 / JCM 21032 / LMG 3331 / NBRC 15819 / NCTC 12168 / Alc 37</strain>
    </source>
</reference>
<protein>
    <recommendedName>
        <fullName evidence="1">Ribosome maturation factor RimM</fullName>
    </recommendedName>
</protein>
<accession>A6WXG0</accession>
<comment type="function">
    <text evidence="1">An accessory protein needed during the final step in the assembly of 30S ribosomal subunit, possibly for assembly of the head region. Essential for efficient processing of 16S rRNA. May be needed both before and after RbfA during the maturation of 16S rRNA. It has affinity for free ribosomal 30S subunits but not for 70S ribosomes.</text>
</comment>
<comment type="subunit">
    <text evidence="1">Binds ribosomal protein uS19.</text>
</comment>
<comment type="subcellular location">
    <subcellularLocation>
        <location evidence="1">Cytoplasm</location>
    </subcellularLocation>
</comment>
<comment type="domain">
    <text evidence="1">The PRC barrel domain binds ribosomal protein uS19.</text>
</comment>
<comment type="similarity">
    <text evidence="1">Belongs to the RimM family.</text>
</comment>
<keyword id="KW-0143">Chaperone</keyword>
<keyword id="KW-0963">Cytoplasm</keyword>
<keyword id="KW-1185">Reference proteome</keyword>
<keyword id="KW-0690">Ribosome biogenesis</keyword>
<keyword id="KW-0698">rRNA processing</keyword>
<gene>
    <name evidence="1" type="primary">rimM</name>
    <name type="ordered locus">Oant_0943</name>
</gene>
<name>RIMM_BRUA4</name>
<organism>
    <name type="scientific">Brucella anthropi (strain ATCC 49188 / DSM 6882 / CCUG 24695 / JCM 21032 / LMG 3331 / NBRC 15819 / NCTC 12168 / Alc 37)</name>
    <name type="common">Ochrobactrum anthropi</name>
    <dbReference type="NCBI Taxonomy" id="439375"/>
    <lineage>
        <taxon>Bacteria</taxon>
        <taxon>Pseudomonadati</taxon>
        <taxon>Pseudomonadota</taxon>
        <taxon>Alphaproteobacteria</taxon>
        <taxon>Hyphomicrobiales</taxon>
        <taxon>Brucellaceae</taxon>
        <taxon>Brucella/Ochrobactrum group</taxon>
        <taxon>Brucella</taxon>
    </lineage>
</organism>